<name>CODY_CLOK5</name>
<feature type="chain" id="PRO_1000082587" description="Global transcriptional regulator CodY">
    <location>
        <begin position="1"/>
        <end position="258"/>
    </location>
</feature>
<feature type="DNA-binding region" description="H-T-H motif" evidence="1">
    <location>
        <begin position="204"/>
        <end position="223"/>
    </location>
</feature>
<feature type="region of interest" description="GAF domain" evidence="1">
    <location>
        <begin position="1"/>
        <end position="156"/>
    </location>
</feature>
<protein>
    <recommendedName>
        <fullName evidence="1">Global transcriptional regulator CodY</fullName>
    </recommendedName>
</protein>
<accession>A5N827</accession>
<reference key="1">
    <citation type="journal article" date="2008" name="Proc. Natl. Acad. Sci. U.S.A.">
        <title>The genome of Clostridium kluyveri, a strict anaerobe with unique metabolic features.</title>
        <authorList>
            <person name="Seedorf H."/>
            <person name="Fricke W.F."/>
            <person name="Veith B."/>
            <person name="Brueggemann H."/>
            <person name="Liesegang H."/>
            <person name="Strittmatter A."/>
            <person name="Miethke M."/>
            <person name="Buckel W."/>
            <person name="Hinderberger J."/>
            <person name="Li F."/>
            <person name="Hagemeier C."/>
            <person name="Thauer R.K."/>
            <person name="Gottschalk G."/>
        </authorList>
    </citation>
    <scope>NUCLEOTIDE SEQUENCE [LARGE SCALE GENOMIC DNA]</scope>
    <source>
        <strain>ATCC 8527 / DSM 555 / NBRC 12016 / NCIMB 10680 / K1</strain>
    </source>
</reference>
<sequence>MSTLLDKTRKLNKILQKSGVEPVVFDDICKILSEVLGCNVYVISRKGKVLGYNFPDGFECSTVKNKIISEMRFPEQYNNKLLNAHETLPNLSNHGICVFEDGTPCDLEDKVTTIVPIIGNRERLGTLLLASFGEKFTDEDLVLGEYSATIVGLEILKSKNDEIEEEARKKAVVQLAIGTLSYSELEAVEHIFNELDGKEGLLVASKIADKVGITRSVIVNALRKFESAGVIESRSLGMKGTHIKILNDKLLDELKKIK</sequence>
<organism>
    <name type="scientific">Clostridium kluyveri (strain ATCC 8527 / DSM 555 / NBRC 12016 / NCIMB 10680 / K1)</name>
    <dbReference type="NCBI Taxonomy" id="431943"/>
    <lineage>
        <taxon>Bacteria</taxon>
        <taxon>Bacillati</taxon>
        <taxon>Bacillota</taxon>
        <taxon>Clostridia</taxon>
        <taxon>Eubacteriales</taxon>
        <taxon>Clostridiaceae</taxon>
        <taxon>Clostridium</taxon>
    </lineage>
</organism>
<dbReference type="EMBL" id="CP000673">
    <property type="protein sequence ID" value="EDK33458.1"/>
    <property type="molecule type" value="Genomic_DNA"/>
</dbReference>
<dbReference type="RefSeq" id="WP_012101805.1">
    <property type="nucleotide sequence ID" value="NC_009706.1"/>
</dbReference>
<dbReference type="SMR" id="A5N827"/>
<dbReference type="STRING" id="431943.CKL_1416"/>
<dbReference type="KEGG" id="ckl:CKL_1416"/>
<dbReference type="eggNOG" id="COG4465">
    <property type="taxonomic scope" value="Bacteria"/>
</dbReference>
<dbReference type="HOGENOM" id="CLU_089581_0_0_9"/>
<dbReference type="Proteomes" id="UP000002411">
    <property type="component" value="Chromosome"/>
</dbReference>
<dbReference type="GO" id="GO:0005737">
    <property type="term" value="C:cytoplasm"/>
    <property type="evidence" value="ECO:0007669"/>
    <property type="project" value="UniProtKB-SubCell"/>
</dbReference>
<dbReference type="GO" id="GO:0003677">
    <property type="term" value="F:DNA binding"/>
    <property type="evidence" value="ECO:0007669"/>
    <property type="project" value="UniProtKB-UniRule"/>
</dbReference>
<dbReference type="GO" id="GO:0003700">
    <property type="term" value="F:DNA-binding transcription factor activity"/>
    <property type="evidence" value="ECO:0007669"/>
    <property type="project" value="InterPro"/>
</dbReference>
<dbReference type="GO" id="GO:0005525">
    <property type="term" value="F:GTP binding"/>
    <property type="evidence" value="ECO:0007669"/>
    <property type="project" value="InterPro"/>
</dbReference>
<dbReference type="GO" id="GO:0045892">
    <property type="term" value="P:negative regulation of DNA-templated transcription"/>
    <property type="evidence" value="ECO:0007669"/>
    <property type="project" value="UniProtKB-UniRule"/>
</dbReference>
<dbReference type="FunFam" id="1.10.10.10:FF:000034">
    <property type="entry name" value="GTP-sensing transcriptional pleiotropic repressor CodY"/>
    <property type="match status" value="1"/>
</dbReference>
<dbReference type="Gene3D" id="3.30.450.40">
    <property type="match status" value="1"/>
</dbReference>
<dbReference type="Gene3D" id="1.10.10.10">
    <property type="entry name" value="Winged helix-like DNA-binding domain superfamily/Winged helix DNA-binding domain"/>
    <property type="match status" value="1"/>
</dbReference>
<dbReference type="HAMAP" id="MF_00621">
    <property type="entry name" value="HTH_type_CodY"/>
    <property type="match status" value="1"/>
</dbReference>
<dbReference type="InterPro" id="IPR014154">
    <property type="entry name" value="CodY"/>
</dbReference>
<dbReference type="InterPro" id="IPR029016">
    <property type="entry name" value="GAF-like_dom_sf"/>
</dbReference>
<dbReference type="InterPro" id="IPR013198">
    <property type="entry name" value="GTP_trans_reg_CodY_C"/>
</dbReference>
<dbReference type="InterPro" id="IPR010312">
    <property type="entry name" value="Transc_reg_CodY_N"/>
</dbReference>
<dbReference type="InterPro" id="IPR036388">
    <property type="entry name" value="WH-like_DNA-bd_sf"/>
</dbReference>
<dbReference type="InterPro" id="IPR036390">
    <property type="entry name" value="WH_DNA-bd_sf"/>
</dbReference>
<dbReference type="NCBIfam" id="TIGR02787">
    <property type="entry name" value="codY_Gpos"/>
    <property type="match status" value="1"/>
</dbReference>
<dbReference type="NCBIfam" id="NF003170">
    <property type="entry name" value="PRK04158.1"/>
    <property type="match status" value="1"/>
</dbReference>
<dbReference type="PANTHER" id="PTHR40062:SF1">
    <property type="entry name" value="GLOBAL TRANSCRIPTIONAL REGULATOR CODY"/>
    <property type="match status" value="1"/>
</dbReference>
<dbReference type="PANTHER" id="PTHR40062">
    <property type="entry name" value="GTP-SENSING TRANSCRIPTIONAL PLEIOTROPIC REPRESSOR CODY"/>
    <property type="match status" value="1"/>
</dbReference>
<dbReference type="Pfam" id="PF06018">
    <property type="entry name" value="CodY"/>
    <property type="match status" value="1"/>
</dbReference>
<dbReference type="Pfam" id="PF08222">
    <property type="entry name" value="HTH_CodY"/>
    <property type="match status" value="1"/>
</dbReference>
<dbReference type="PIRSF" id="PIRSF011572">
    <property type="entry name" value="GTP_sensing_CodY"/>
    <property type="match status" value="1"/>
</dbReference>
<dbReference type="SUPFAM" id="SSF46785">
    <property type="entry name" value="Winged helix' DNA-binding domain"/>
    <property type="match status" value="1"/>
</dbReference>
<keyword id="KW-0963">Cytoplasm</keyword>
<keyword id="KW-0238">DNA-binding</keyword>
<keyword id="KW-1185">Reference proteome</keyword>
<keyword id="KW-0678">Repressor</keyword>
<keyword id="KW-0804">Transcription</keyword>
<keyword id="KW-0805">Transcription regulation</keyword>
<evidence type="ECO:0000255" key="1">
    <source>
        <dbReference type="HAMAP-Rule" id="MF_00621"/>
    </source>
</evidence>
<proteinExistence type="inferred from homology"/>
<gene>
    <name evidence="1" type="primary">codY</name>
    <name type="ordered locus">CKL_1416</name>
</gene>
<comment type="function">
    <text evidence="1">DNA-binding global transcriptional regulator which is involved in the adaptive response to starvation and acts by directly or indirectly controlling the expression of numerous genes in response to nutrient availability. During rapid exponential growth, CodY is highly active and represses genes whose products allow adaptation to nutrient depletion.</text>
</comment>
<comment type="subcellular location">
    <subcellularLocation>
        <location evidence="1">Cytoplasm</location>
    </subcellularLocation>
</comment>
<comment type="similarity">
    <text evidence="1">Belongs to the CodY family.</text>
</comment>